<feature type="chain" id="PRO_0000074606" description="Uncharacterized N-acetyltransferase ycf52-like">
    <location>
        <begin position="1"/>
        <end position="180"/>
    </location>
</feature>
<feature type="domain" description="N-acetyltransferase" evidence="1">
    <location>
        <begin position="45"/>
        <end position="180"/>
    </location>
</feature>
<gene>
    <name type="ordered locus">Pro_0564</name>
</gene>
<organism>
    <name type="scientific">Prochlorococcus marinus (strain SARG / CCMP1375 / SS120)</name>
    <dbReference type="NCBI Taxonomy" id="167539"/>
    <lineage>
        <taxon>Bacteria</taxon>
        <taxon>Bacillati</taxon>
        <taxon>Cyanobacteriota</taxon>
        <taxon>Cyanophyceae</taxon>
        <taxon>Synechococcales</taxon>
        <taxon>Prochlorococcaceae</taxon>
        <taxon>Prochlorococcus</taxon>
    </lineage>
</organism>
<comment type="similarity">
    <text evidence="2">Belongs to the acetyltransferase family. Ycf52 subfamily.</text>
</comment>
<accession>Q51893</accession>
<evidence type="ECO:0000255" key="1">
    <source>
        <dbReference type="PROSITE-ProRule" id="PRU00532"/>
    </source>
</evidence>
<evidence type="ECO:0000305" key="2"/>
<proteinExistence type="inferred from homology"/>
<name>YC52L_PROMA</name>
<dbReference type="EC" id="2.3.1.-"/>
<dbReference type="EMBL" id="U44977">
    <property type="protein sequence ID" value="AAC15819.1"/>
    <property type="molecule type" value="Genomic_DNA"/>
</dbReference>
<dbReference type="EMBL" id="AE017126">
    <property type="protein sequence ID" value="AAP99609.1"/>
    <property type="molecule type" value="Genomic_DNA"/>
</dbReference>
<dbReference type="PIR" id="T52493">
    <property type="entry name" value="T52493"/>
</dbReference>
<dbReference type="RefSeq" id="NP_874957.1">
    <property type="nucleotide sequence ID" value="NC_005042.1"/>
</dbReference>
<dbReference type="RefSeq" id="WP_011124717.1">
    <property type="nucleotide sequence ID" value="NC_005042.1"/>
</dbReference>
<dbReference type="SMR" id="Q51893"/>
<dbReference type="STRING" id="167539.Pro_0564"/>
<dbReference type="EnsemblBacteria" id="AAP99609">
    <property type="protein sequence ID" value="AAP99609"/>
    <property type="gene ID" value="Pro_0564"/>
</dbReference>
<dbReference type="KEGG" id="pma:Pro_0564"/>
<dbReference type="PATRIC" id="fig|167539.5.peg.579"/>
<dbReference type="eggNOG" id="COG0456">
    <property type="taxonomic scope" value="Bacteria"/>
</dbReference>
<dbReference type="HOGENOM" id="CLU_086503_0_1_3"/>
<dbReference type="OrthoDB" id="9775804at2"/>
<dbReference type="Proteomes" id="UP000001420">
    <property type="component" value="Chromosome"/>
</dbReference>
<dbReference type="GO" id="GO:0005737">
    <property type="term" value="C:cytoplasm"/>
    <property type="evidence" value="ECO:0007669"/>
    <property type="project" value="TreeGrafter"/>
</dbReference>
<dbReference type="GO" id="GO:0008080">
    <property type="term" value="F:N-acetyltransferase activity"/>
    <property type="evidence" value="ECO:0007669"/>
    <property type="project" value="InterPro"/>
</dbReference>
<dbReference type="CDD" id="cd04301">
    <property type="entry name" value="NAT_SF"/>
    <property type="match status" value="1"/>
</dbReference>
<dbReference type="Gene3D" id="3.40.630.30">
    <property type="match status" value="1"/>
</dbReference>
<dbReference type="InterPro" id="IPR016181">
    <property type="entry name" value="Acyl_CoA_acyltransferase"/>
</dbReference>
<dbReference type="InterPro" id="IPR000182">
    <property type="entry name" value="GNAT_dom"/>
</dbReference>
<dbReference type="InterPro" id="IPR045039">
    <property type="entry name" value="NSI-like"/>
</dbReference>
<dbReference type="PANTHER" id="PTHR43626">
    <property type="entry name" value="ACYL-COA N-ACYLTRANSFERASE"/>
    <property type="match status" value="1"/>
</dbReference>
<dbReference type="PANTHER" id="PTHR43626:SF4">
    <property type="entry name" value="GCN5-RELATED N-ACETYLTRANSFERASE 2, CHLOROPLASTIC"/>
    <property type="match status" value="1"/>
</dbReference>
<dbReference type="Pfam" id="PF00583">
    <property type="entry name" value="Acetyltransf_1"/>
    <property type="match status" value="1"/>
</dbReference>
<dbReference type="SUPFAM" id="SSF55729">
    <property type="entry name" value="Acyl-CoA N-acyltransferases (Nat)"/>
    <property type="match status" value="1"/>
</dbReference>
<dbReference type="PROSITE" id="PS51186">
    <property type="entry name" value="GNAT"/>
    <property type="match status" value="1"/>
</dbReference>
<protein>
    <recommendedName>
        <fullName>Uncharacterized N-acetyltransferase ycf52-like</fullName>
        <ecNumber>2.3.1.-</ecNumber>
    </recommendedName>
</protein>
<sequence length="180" mass="20565">MIKKIGERKISFSGWSNGRSGSNDFREMYGSDACECISSNDQYTFVFSQVRTLDLIELEQLLQSVGWSRRPIRRVKKALDNSLLKVGVWQHDPKFPRLIGFARCTGDEVIQATIWDVAIHPVYQGFGLGKELMSYVLRSLKDKGIERVVLFADPGVISFYQSQGWTLEPKGNRCAFWYAN</sequence>
<keyword id="KW-0012">Acyltransferase</keyword>
<keyword id="KW-1185">Reference proteome</keyword>
<keyword id="KW-0808">Transferase</keyword>
<reference key="1">
    <citation type="journal article" date="1998" name="Mol. Gen. Genet.">
        <title>Unique organization of the dnaA region from Prochlorococcus marinus CCMP1375, a marine cyanobacterium.</title>
        <authorList>
            <person name="Richter S."/>
            <person name="Hess W.R."/>
            <person name="Krause M."/>
            <person name="Messer W."/>
        </authorList>
    </citation>
    <scope>NUCLEOTIDE SEQUENCE [GENOMIC DNA]</scope>
    <source>
        <strain>SARG / CCMP1375 / SS120</strain>
    </source>
</reference>
<reference key="2">
    <citation type="journal article" date="2003" name="Proc. Natl. Acad. Sci. U.S.A.">
        <title>Genome sequence of the cyanobacterium Prochlorococcus marinus SS120, a nearly minimal oxyphototrophic genome.</title>
        <authorList>
            <person name="Dufresne A."/>
            <person name="Salanoubat M."/>
            <person name="Partensky F."/>
            <person name="Artiguenave F."/>
            <person name="Axmann I.M."/>
            <person name="Barbe V."/>
            <person name="Duprat S."/>
            <person name="Galperin M.Y."/>
            <person name="Koonin E.V."/>
            <person name="Le Gall F."/>
            <person name="Makarova K.S."/>
            <person name="Ostrowski M."/>
            <person name="Oztas S."/>
            <person name="Robert C."/>
            <person name="Rogozin I.B."/>
            <person name="Scanlan D.J."/>
            <person name="Tandeau de Marsac N."/>
            <person name="Weissenbach J."/>
            <person name="Wincker P."/>
            <person name="Wolf Y.I."/>
            <person name="Hess W.R."/>
        </authorList>
    </citation>
    <scope>NUCLEOTIDE SEQUENCE [LARGE SCALE GENOMIC DNA]</scope>
    <source>
        <strain>SARG / CCMP1375 / SS120</strain>
    </source>
</reference>